<proteinExistence type="inferred from homology"/>
<keyword id="KW-0687">Ribonucleoprotein</keyword>
<keyword id="KW-0689">Ribosomal protein</keyword>
<keyword id="KW-0694">RNA-binding</keyword>
<keyword id="KW-0699">rRNA-binding</keyword>
<accession>Q48RG8</accession>
<evidence type="ECO:0000255" key="1">
    <source>
        <dbReference type="HAMAP-Rule" id="MF_00537"/>
    </source>
</evidence>
<evidence type="ECO:0000256" key="2">
    <source>
        <dbReference type="SAM" id="MobiDB-lite"/>
    </source>
</evidence>
<evidence type="ECO:0000305" key="3"/>
<feature type="chain" id="PRO_0000269072" description="Small ribosomal subunit protein uS14A">
    <location>
        <begin position="1"/>
        <end position="89"/>
    </location>
</feature>
<feature type="region of interest" description="Disordered" evidence="2">
    <location>
        <begin position="34"/>
        <end position="54"/>
    </location>
</feature>
<organism>
    <name type="scientific">Streptococcus pyogenes serotype M28 (strain MGAS6180)</name>
    <dbReference type="NCBI Taxonomy" id="319701"/>
    <lineage>
        <taxon>Bacteria</taxon>
        <taxon>Bacillati</taxon>
        <taxon>Bacillota</taxon>
        <taxon>Bacilli</taxon>
        <taxon>Lactobacillales</taxon>
        <taxon>Streptococcaceae</taxon>
        <taxon>Streptococcus</taxon>
    </lineage>
</organism>
<reference key="1">
    <citation type="journal article" date="2005" name="J. Infect. Dis.">
        <title>Genome sequence of a serotype M28 strain of group A Streptococcus: potential new insights into puerperal sepsis and bacterial disease specificity.</title>
        <authorList>
            <person name="Green N.M."/>
            <person name="Zhang S."/>
            <person name="Porcella S.F."/>
            <person name="Nagiec M.J."/>
            <person name="Barbian K.D."/>
            <person name="Beres S.B."/>
            <person name="Lefebvre R.B."/>
            <person name="Musser J.M."/>
        </authorList>
    </citation>
    <scope>NUCLEOTIDE SEQUENCE [LARGE SCALE GENOMIC DNA]</scope>
    <source>
        <strain>MGAS6180</strain>
    </source>
</reference>
<comment type="function">
    <text evidence="1">Binds 16S rRNA, required for the assembly of 30S particles and may also be responsible for determining the conformation of the 16S rRNA at the A site.</text>
</comment>
<comment type="subunit">
    <text evidence="1">Part of the 30S ribosomal subunit. Contacts proteins S3 and S10.</text>
</comment>
<comment type="similarity">
    <text evidence="1">Belongs to the universal ribosomal protein uS14 family.</text>
</comment>
<name>RS14_STRPM</name>
<gene>
    <name evidence="1" type="primary">rpsN</name>
    <name type="synonym">rpsN2</name>
    <name type="ordered locus">M28_Spy1582</name>
</gene>
<dbReference type="EMBL" id="CP000056">
    <property type="protein sequence ID" value="AAX72692.1"/>
    <property type="molecule type" value="Genomic_DNA"/>
</dbReference>
<dbReference type="RefSeq" id="WP_002982921.1">
    <property type="nucleotide sequence ID" value="NC_007296.2"/>
</dbReference>
<dbReference type="SMR" id="Q48RG8"/>
<dbReference type="GeneID" id="69900252"/>
<dbReference type="KEGG" id="spb:M28_Spy1582"/>
<dbReference type="HOGENOM" id="CLU_139869_0_0_9"/>
<dbReference type="GO" id="GO:0005737">
    <property type="term" value="C:cytoplasm"/>
    <property type="evidence" value="ECO:0007669"/>
    <property type="project" value="UniProtKB-ARBA"/>
</dbReference>
<dbReference type="GO" id="GO:0015935">
    <property type="term" value="C:small ribosomal subunit"/>
    <property type="evidence" value="ECO:0007669"/>
    <property type="project" value="TreeGrafter"/>
</dbReference>
<dbReference type="GO" id="GO:0019843">
    <property type="term" value="F:rRNA binding"/>
    <property type="evidence" value="ECO:0007669"/>
    <property type="project" value="UniProtKB-UniRule"/>
</dbReference>
<dbReference type="GO" id="GO:0003735">
    <property type="term" value="F:structural constituent of ribosome"/>
    <property type="evidence" value="ECO:0007669"/>
    <property type="project" value="InterPro"/>
</dbReference>
<dbReference type="GO" id="GO:0006412">
    <property type="term" value="P:translation"/>
    <property type="evidence" value="ECO:0007669"/>
    <property type="project" value="UniProtKB-UniRule"/>
</dbReference>
<dbReference type="Gene3D" id="4.10.830.10">
    <property type="entry name" value="30s Ribosomal Protein S14, Chain N"/>
    <property type="match status" value="1"/>
</dbReference>
<dbReference type="HAMAP" id="MF_00537">
    <property type="entry name" value="Ribosomal_uS14_1"/>
    <property type="match status" value="1"/>
</dbReference>
<dbReference type="InterPro" id="IPR001209">
    <property type="entry name" value="Ribosomal_uS14"/>
</dbReference>
<dbReference type="InterPro" id="IPR023036">
    <property type="entry name" value="Ribosomal_uS14_bac/plastid"/>
</dbReference>
<dbReference type="InterPro" id="IPR043140">
    <property type="entry name" value="Ribosomal_uS14_sf"/>
</dbReference>
<dbReference type="NCBIfam" id="NF006477">
    <property type="entry name" value="PRK08881.1"/>
    <property type="match status" value="1"/>
</dbReference>
<dbReference type="PANTHER" id="PTHR19836">
    <property type="entry name" value="30S RIBOSOMAL PROTEIN S14"/>
    <property type="match status" value="1"/>
</dbReference>
<dbReference type="PANTHER" id="PTHR19836:SF19">
    <property type="entry name" value="SMALL RIBOSOMAL SUBUNIT PROTEIN US14M"/>
    <property type="match status" value="1"/>
</dbReference>
<dbReference type="Pfam" id="PF00253">
    <property type="entry name" value="Ribosomal_S14"/>
    <property type="match status" value="1"/>
</dbReference>
<dbReference type="SUPFAM" id="SSF57716">
    <property type="entry name" value="Glucocorticoid receptor-like (DNA-binding domain)"/>
    <property type="match status" value="1"/>
</dbReference>
<sequence>MAKKSKIAKYQKQLQLIEQYADLRRDLKAKGDYESLRKLPRDSNPNRLKNRDKIDGRPHAYMRKFGVSRINFRDLAHKGQLPGVTKASW</sequence>
<protein>
    <recommendedName>
        <fullName evidence="1">Small ribosomal subunit protein uS14A</fullName>
    </recommendedName>
    <alternativeName>
        <fullName evidence="3">30S ribosomal protein S14</fullName>
    </alternativeName>
</protein>